<protein>
    <recommendedName>
        <fullName evidence="1">Cytochrome b6-f complex subunit 5</fullName>
    </recommendedName>
    <alternativeName>
        <fullName evidence="1">Cytochrome b6-f complex subunit PetG</fullName>
    </alternativeName>
    <alternativeName>
        <fullName evidence="1">Cytochrome b6-f complex subunit V</fullName>
    </alternativeName>
</protein>
<gene>
    <name evidence="1" type="primary">petG</name>
</gene>
<geneLocation type="chloroplast"/>
<organism>
    <name type="scientific">Aethionema cordifolium</name>
    <name type="common">Lebanon stonecress</name>
    <dbReference type="NCBI Taxonomy" id="434059"/>
    <lineage>
        <taxon>Eukaryota</taxon>
        <taxon>Viridiplantae</taxon>
        <taxon>Streptophyta</taxon>
        <taxon>Embryophyta</taxon>
        <taxon>Tracheophyta</taxon>
        <taxon>Spermatophyta</taxon>
        <taxon>Magnoliopsida</taxon>
        <taxon>eudicotyledons</taxon>
        <taxon>Gunneridae</taxon>
        <taxon>Pentapetalae</taxon>
        <taxon>rosids</taxon>
        <taxon>malvids</taxon>
        <taxon>Brassicales</taxon>
        <taxon>Brassicaceae</taxon>
        <taxon>Aethionemeae</taxon>
        <taxon>Aethionema</taxon>
    </lineage>
</organism>
<proteinExistence type="inferred from homology"/>
<name>PETG_AETCO</name>
<reference key="1">
    <citation type="submission" date="2007-03" db="EMBL/GenBank/DDBJ databases">
        <title>Sequencing analysis of Aethionema coridifolium chloroplast DNA.</title>
        <authorList>
            <person name="Hosouchi T."/>
            <person name="Tsuruoka H."/>
            <person name="Kotani H."/>
        </authorList>
    </citation>
    <scope>NUCLEOTIDE SEQUENCE [LARGE SCALE GENOMIC DNA]</scope>
</reference>
<accession>A4QJD4</accession>
<feature type="chain" id="PRO_0000355365" description="Cytochrome b6-f complex subunit 5">
    <location>
        <begin position="1"/>
        <end position="37"/>
    </location>
</feature>
<feature type="transmembrane region" description="Helical" evidence="1">
    <location>
        <begin position="5"/>
        <end position="25"/>
    </location>
</feature>
<sequence>MIEVFLFGIVLGLIPITLAGLFVTAYLQYRRGDQLDF</sequence>
<comment type="function">
    <text evidence="1">Component of the cytochrome b6-f complex, which mediates electron transfer between photosystem II (PSII) and photosystem I (PSI), cyclic electron flow around PSI, and state transitions. PetG is required for either the stability or assembly of the cytochrome b6-f complex.</text>
</comment>
<comment type="subunit">
    <text evidence="1">The 4 large subunits of the cytochrome b6-f complex are cytochrome b6, subunit IV (17 kDa polypeptide, PetD), cytochrome f and the Rieske protein, while the 4 small subunits are PetG, PetL, PetM and PetN. The complex functions as a dimer.</text>
</comment>
<comment type="subcellular location">
    <subcellularLocation>
        <location evidence="1">Plastid</location>
        <location evidence="1">Chloroplast thylakoid membrane</location>
        <topology evidence="1">Single-pass membrane protein</topology>
    </subcellularLocation>
</comment>
<comment type="similarity">
    <text evidence="1">Belongs to the PetG family.</text>
</comment>
<keyword id="KW-0150">Chloroplast</keyword>
<keyword id="KW-0249">Electron transport</keyword>
<keyword id="KW-0472">Membrane</keyword>
<keyword id="KW-0602">Photosynthesis</keyword>
<keyword id="KW-0934">Plastid</keyword>
<keyword id="KW-0793">Thylakoid</keyword>
<keyword id="KW-0812">Transmembrane</keyword>
<keyword id="KW-1133">Transmembrane helix</keyword>
<keyword id="KW-0813">Transport</keyword>
<evidence type="ECO:0000255" key="1">
    <source>
        <dbReference type="HAMAP-Rule" id="MF_00432"/>
    </source>
</evidence>
<dbReference type="EMBL" id="AP009366">
    <property type="protein sequence ID" value="BAF49789.1"/>
    <property type="molecule type" value="Genomic_DNA"/>
</dbReference>
<dbReference type="RefSeq" id="YP_001122965.1">
    <property type="nucleotide sequence ID" value="NC_009265.1"/>
</dbReference>
<dbReference type="SMR" id="A4QJD4"/>
<dbReference type="GeneID" id="4968550"/>
<dbReference type="GO" id="GO:0009535">
    <property type="term" value="C:chloroplast thylakoid membrane"/>
    <property type="evidence" value="ECO:0007669"/>
    <property type="project" value="UniProtKB-SubCell"/>
</dbReference>
<dbReference type="GO" id="GO:0009512">
    <property type="term" value="C:cytochrome b6f complex"/>
    <property type="evidence" value="ECO:0007669"/>
    <property type="project" value="InterPro"/>
</dbReference>
<dbReference type="GO" id="GO:0045158">
    <property type="term" value="F:electron transporter, transferring electrons within cytochrome b6/f complex of photosystem II activity"/>
    <property type="evidence" value="ECO:0007669"/>
    <property type="project" value="UniProtKB-UniRule"/>
</dbReference>
<dbReference type="GO" id="GO:0017004">
    <property type="term" value="P:cytochrome complex assembly"/>
    <property type="evidence" value="ECO:0007669"/>
    <property type="project" value="UniProtKB-UniRule"/>
</dbReference>
<dbReference type="GO" id="GO:0015979">
    <property type="term" value="P:photosynthesis"/>
    <property type="evidence" value="ECO:0007669"/>
    <property type="project" value="UniProtKB-KW"/>
</dbReference>
<dbReference type="HAMAP" id="MF_00432">
    <property type="entry name" value="Cytb6_f_PetG"/>
    <property type="match status" value="1"/>
</dbReference>
<dbReference type="InterPro" id="IPR003683">
    <property type="entry name" value="Cyt_6/f_cplx_su5"/>
</dbReference>
<dbReference type="InterPro" id="IPR036099">
    <property type="entry name" value="Cyt_6/f_cplx_su5_sf"/>
</dbReference>
<dbReference type="NCBIfam" id="NF001907">
    <property type="entry name" value="PRK00665.1"/>
    <property type="match status" value="1"/>
</dbReference>
<dbReference type="Pfam" id="PF02529">
    <property type="entry name" value="PetG"/>
    <property type="match status" value="1"/>
</dbReference>
<dbReference type="PIRSF" id="PIRSF000034">
    <property type="entry name" value="Cyt_b6-f_V"/>
    <property type="match status" value="1"/>
</dbReference>
<dbReference type="SUPFAM" id="SSF103446">
    <property type="entry name" value="PetG subunit of the cytochrome b6f complex"/>
    <property type="match status" value="1"/>
</dbReference>